<organism>
    <name type="scientific">Homo sapiens</name>
    <name type="common">Human</name>
    <dbReference type="NCBI Taxonomy" id="9606"/>
    <lineage>
        <taxon>Eukaryota</taxon>
        <taxon>Metazoa</taxon>
        <taxon>Chordata</taxon>
        <taxon>Craniata</taxon>
        <taxon>Vertebrata</taxon>
        <taxon>Euteleostomi</taxon>
        <taxon>Mammalia</taxon>
        <taxon>Eutheria</taxon>
        <taxon>Euarchontoglires</taxon>
        <taxon>Primates</taxon>
        <taxon>Haplorrhini</taxon>
        <taxon>Catarrhini</taxon>
        <taxon>Hominidae</taxon>
        <taxon>Homo</taxon>
    </lineage>
</organism>
<comment type="function">
    <text evidence="1 4 7 8">Amino acid transporter that plays an important role in the absorption of amino acids in the intestinal tract. Mediates the uptake of a broad range of neutral and cationic amino acids (with the exception of proline) in a Na(+)/Cl(-)-dependent manner (PubMed:10446133). Transports non-alpha-amino acids such as beta-alanine with low affinity, and has a higher affinity for dipolar and cationic amino acids such as leucine and lysine (PubMed:18599538). Can also transport carnitine, butirylcarnitine and propionylcarnitine coupled to the transmembrane gradients of Na(+) and Cl(-) (PubMed:17855766).</text>
</comment>
<comment type="catalytic activity">
    <reaction evidence="4 7">
        <text>glycine(out) + chloride(out) + 2 Na(+)(out) = glycine(in) + chloride(in) + 2 Na(+)(in)</text>
        <dbReference type="Rhea" id="RHEA:70691"/>
        <dbReference type="ChEBI" id="CHEBI:17996"/>
        <dbReference type="ChEBI" id="CHEBI:29101"/>
        <dbReference type="ChEBI" id="CHEBI:57305"/>
    </reaction>
</comment>
<comment type="catalytic activity">
    <reaction evidence="4 8">
        <text>L-leucine(out) + chloride(out) + 2 Na(+)(out) = L-leucine(in) + chloride(in) + 2 Na(+)(in)</text>
        <dbReference type="Rhea" id="RHEA:71279"/>
        <dbReference type="ChEBI" id="CHEBI:17996"/>
        <dbReference type="ChEBI" id="CHEBI:29101"/>
        <dbReference type="ChEBI" id="CHEBI:57427"/>
    </reaction>
</comment>
<comment type="catalytic activity">
    <reaction evidence="4">
        <text>L-glutamine(out) + chloride(out) + 2 Na(+)(out) = L-glutamine(in) + chloride(in) + 2 Na(+)(in)</text>
        <dbReference type="Rhea" id="RHEA:71283"/>
        <dbReference type="ChEBI" id="CHEBI:17996"/>
        <dbReference type="ChEBI" id="CHEBI:29101"/>
        <dbReference type="ChEBI" id="CHEBI:58359"/>
    </reaction>
</comment>
<comment type="catalytic activity">
    <reaction evidence="4">
        <text>L-arginine(out) + chloride(out) + 2 Na(+)(out) = L-arginine(in) + chloride(in) + 2 Na(+)(in)</text>
        <dbReference type="Rhea" id="RHEA:71287"/>
        <dbReference type="ChEBI" id="CHEBI:17996"/>
        <dbReference type="ChEBI" id="CHEBI:29101"/>
        <dbReference type="ChEBI" id="CHEBI:32682"/>
    </reaction>
</comment>
<comment type="catalytic activity">
    <reaction evidence="7">
        <text>(R)-carnitine(out) + chloride(out) + 2 Na(+)(out) = (R)-carnitine(in) + chloride(in) + 2 Na(+)(in)</text>
        <dbReference type="Rhea" id="RHEA:71291"/>
        <dbReference type="ChEBI" id="CHEBI:16347"/>
        <dbReference type="ChEBI" id="CHEBI:17996"/>
        <dbReference type="ChEBI" id="CHEBI:29101"/>
    </reaction>
</comment>
<comment type="catalytic activity">
    <reaction evidence="11">
        <text>O-butanoyl-(R)-carnitine(out) + chloride(out) + 2 Na(+)(out) = O-butanoyl-(R)-carnitine(in) + chloride(in) + 2 Na(+)(in)</text>
        <dbReference type="Rhea" id="RHEA:72163"/>
        <dbReference type="ChEBI" id="CHEBI:17996"/>
        <dbReference type="ChEBI" id="CHEBI:21949"/>
        <dbReference type="ChEBI" id="CHEBI:29101"/>
    </reaction>
</comment>
<comment type="catalytic activity">
    <reaction evidence="1">
        <text>O-propanoyl-(R)-carnitine(out) + chloride(out) + 2 Na(+)(out) = O-propanoyl-(R)-carnitine(in) + chloride(in) + 2 Na(+)(in)</text>
        <dbReference type="Rhea" id="RHEA:71295"/>
        <dbReference type="ChEBI" id="CHEBI:17996"/>
        <dbReference type="ChEBI" id="CHEBI:29101"/>
        <dbReference type="ChEBI" id="CHEBI:53210"/>
    </reaction>
</comment>
<comment type="catalytic activity">
    <reaction evidence="4">
        <text>L-isoleucine(out) + chloride(out) + 2 Na(+)(out) = L-isoleucine(in) + chloride(in) + 2 Na(+)(in)</text>
        <dbReference type="Rhea" id="RHEA:71299"/>
        <dbReference type="ChEBI" id="CHEBI:17996"/>
        <dbReference type="ChEBI" id="CHEBI:29101"/>
        <dbReference type="ChEBI" id="CHEBI:58045"/>
    </reaction>
</comment>
<comment type="catalytic activity">
    <reaction evidence="4">
        <text>L-methionine(out) + chloride(out) + 2 Na(+)(out) = L-methionine(in) + chloride(in) + 2 Na(+)(in)</text>
        <dbReference type="Rhea" id="RHEA:71303"/>
        <dbReference type="ChEBI" id="CHEBI:17996"/>
        <dbReference type="ChEBI" id="CHEBI:29101"/>
        <dbReference type="ChEBI" id="CHEBI:57844"/>
    </reaction>
</comment>
<comment type="catalytic activity">
    <reaction evidence="4">
        <text>L-valine(out) + chloride(out) + 2 Na(+)(out) = L-valine(in) + chloride(in) + 2 Na(+)(in)</text>
        <dbReference type="Rhea" id="RHEA:71307"/>
        <dbReference type="ChEBI" id="CHEBI:17996"/>
        <dbReference type="ChEBI" id="CHEBI:29101"/>
        <dbReference type="ChEBI" id="CHEBI:57762"/>
    </reaction>
</comment>
<comment type="catalytic activity">
    <reaction evidence="4">
        <text>L-alanine(out) + chloride(out) + 2 Na(+)(out) = L-alanine(in) + chloride(in) + 2 Na(+)(in)</text>
        <dbReference type="Rhea" id="RHEA:71311"/>
        <dbReference type="ChEBI" id="CHEBI:17996"/>
        <dbReference type="ChEBI" id="CHEBI:29101"/>
        <dbReference type="ChEBI" id="CHEBI:57972"/>
    </reaction>
</comment>
<comment type="catalytic activity">
    <reaction evidence="4">
        <text>L-serine(out) + chloride(out) + 2 Na(+)(out) = L-serine(in) + chloride(in) + 2 Na(+)(in)</text>
        <dbReference type="Rhea" id="RHEA:71315"/>
        <dbReference type="ChEBI" id="CHEBI:17996"/>
        <dbReference type="ChEBI" id="CHEBI:29101"/>
        <dbReference type="ChEBI" id="CHEBI:33384"/>
    </reaction>
</comment>
<comment type="catalytic activity">
    <reaction evidence="4">
        <text>L-cysteine(out) + chloride(out) + 2 Na(+)(out) = L-cysteine(in) + chloride(in) + 2 Na(+)(in)</text>
        <dbReference type="Rhea" id="RHEA:71319"/>
        <dbReference type="ChEBI" id="CHEBI:17996"/>
        <dbReference type="ChEBI" id="CHEBI:29101"/>
        <dbReference type="ChEBI" id="CHEBI:35235"/>
    </reaction>
</comment>
<comment type="catalytic activity">
    <reaction evidence="4">
        <text>L-asparagine(out) + chloride(out) + 2 Na(+)(out) = L-asparagine(in) + chloride(in) + 2 Na(+)(in)</text>
        <dbReference type="Rhea" id="RHEA:71323"/>
        <dbReference type="ChEBI" id="CHEBI:17996"/>
        <dbReference type="ChEBI" id="CHEBI:29101"/>
        <dbReference type="ChEBI" id="CHEBI:58048"/>
    </reaction>
</comment>
<comment type="catalytic activity">
    <reaction evidence="4">
        <text>L-threonine(out) + chloride(out) + 2 Na(+)(out) = L-threonine(in) + chloride(in) + 2 Na(+)(in)</text>
        <dbReference type="Rhea" id="RHEA:71327"/>
        <dbReference type="ChEBI" id="CHEBI:17996"/>
        <dbReference type="ChEBI" id="CHEBI:29101"/>
        <dbReference type="ChEBI" id="CHEBI:57926"/>
    </reaction>
</comment>
<comment type="catalytic activity">
    <reaction evidence="4">
        <text>L-phenylalanine(out) + chloride(out) + 2 Na(+)(out) = L-phenylalanine(in) + chloride(in) + 2 Na(+)(in)</text>
        <dbReference type="Rhea" id="RHEA:71331"/>
        <dbReference type="ChEBI" id="CHEBI:17996"/>
        <dbReference type="ChEBI" id="CHEBI:29101"/>
        <dbReference type="ChEBI" id="CHEBI:58095"/>
    </reaction>
</comment>
<comment type="catalytic activity">
    <reaction evidence="4">
        <text>L-tryptophan(out) + chloride(out) + 2 Na(+)(out) = L-tryptophan(in) + chloride(in) + 2 Na(+)(in)</text>
        <dbReference type="Rhea" id="RHEA:71335"/>
        <dbReference type="ChEBI" id="CHEBI:17996"/>
        <dbReference type="ChEBI" id="CHEBI:29101"/>
        <dbReference type="ChEBI" id="CHEBI:57912"/>
    </reaction>
</comment>
<comment type="catalytic activity">
    <reaction evidence="4">
        <text>L-tyrosine(out) + chloride(out) + 2 Na(+)(out) = L-tyrosine(in) + chloride(in) + 2 Na(+)(in)</text>
        <dbReference type="Rhea" id="RHEA:71339"/>
        <dbReference type="ChEBI" id="CHEBI:17996"/>
        <dbReference type="ChEBI" id="CHEBI:29101"/>
        <dbReference type="ChEBI" id="CHEBI:58315"/>
    </reaction>
</comment>
<comment type="catalytic activity">
    <reaction evidence="4">
        <text>L-histidine(out) + chloride(out) + 2 Na(+)(out) = L-histidine(in) + chloride(in) + 2 Na(+)(in)</text>
        <dbReference type="Rhea" id="RHEA:71343"/>
        <dbReference type="ChEBI" id="CHEBI:17996"/>
        <dbReference type="ChEBI" id="CHEBI:29101"/>
        <dbReference type="ChEBI" id="CHEBI:57595"/>
    </reaction>
</comment>
<comment type="catalytic activity">
    <reaction evidence="4 8">
        <text>L-lysine(out) + chloride(out) + 2 Na(+)(out) = L-lysine(in) + chloride(in) + 2 Na(+)(in)</text>
        <dbReference type="Rhea" id="RHEA:71347"/>
        <dbReference type="ChEBI" id="CHEBI:17996"/>
        <dbReference type="ChEBI" id="CHEBI:29101"/>
        <dbReference type="ChEBI" id="CHEBI:32551"/>
    </reaction>
</comment>
<comment type="catalytic activity">
    <reaction evidence="8">
        <text>beta-alanine(out) + chloride(out) + 2 Na(+)(out) = beta-alanine(in) + chloride(in) + 2 Na(+)(in)</text>
        <dbReference type="Rhea" id="RHEA:71247"/>
        <dbReference type="ChEBI" id="CHEBI:17996"/>
        <dbReference type="ChEBI" id="CHEBI:29101"/>
        <dbReference type="ChEBI" id="CHEBI:57966"/>
    </reaction>
</comment>
<comment type="biophysicochemical properties">
    <kinetics>
        <KM evidence="7">0.32 mM for glycine</KM>
        <KM evidence="7">1.5 mM for Na(+)</KM>
    </kinetics>
</comment>
<comment type="subcellular location">
    <subcellularLocation>
        <location evidence="10">Membrane</location>
        <topology evidence="2">Multi-pass membrane protein</topology>
    </subcellularLocation>
    <subcellularLocation>
        <location evidence="1">Apical cell membrane</location>
        <topology evidence="2">Multi-pass membrane protein</topology>
    </subcellularLocation>
</comment>
<comment type="tissue specificity">
    <text evidence="4">Levels are highest in adult and fetal lung, in trachea and salivary gland. Lower levels detected in mammary gland, stomach and pituitary gland, and very low levels in colon, uterus, prostate and testis.</text>
</comment>
<comment type="disease">
    <text evidence="5 6">Genetic variations in SLC6A14 may be associated with obesity in some populations, as shown by significant differences in allele frequencies between obese and non-obese individuals.</text>
</comment>
<comment type="miscellaneous">
    <text>Transport inhibited by BCH (2-aminobicyclo-[2.2.1]-heptane-2-carboxylic acid).</text>
</comment>
<comment type="similarity">
    <text evidence="9">Belongs to the sodium:neurotransmitter symporter (SNF) (TC 2.A.22) family. SLC6A14 subfamily.</text>
</comment>
<dbReference type="EMBL" id="AF151978">
    <property type="protein sequence ID" value="AAD49223.1"/>
    <property type="molecule type" value="mRNA"/>
</dbReference>
<dbReference type="EMBL" id="Z96810">
    <property type="protein sequence ID" value="CAI42799.1"/>
    <property type="molecule type" value="Genomic_DNA"/>
</dbReference>
<dbReference type="EMBL" id="AL034411">
    <property type="protein sequence ID" value="CAI42799.1"/>
    <property type="status" value="JOINED"/>
    <property type="molecule type" value="Genomic_DNA"/>
</dbReference>
<dbReference type="EMBL" id="AL034411">
    <property type="protein sequence ID" value="CAI43081.1"/>
    <property type="molecule type" value="Genomic_DNA"/>
</dbReference>
<dbReference type="EMBL" id="Z96810">
    <property type="protein sequence ID" value="CAI43081.1"/>
    <property type="status" value="JOINED"/>
    <property type="molecule type" value="Genomic_DNA"/>
</dbReference>
<dbReference type="EMBL" id="BC093710">
    <property type="protein sequence ID" value="AAH93710.1"/>
    <property type="molecule type" value="mRNA"/>
</dbReference>
<dbReference type="EMBL" id="BC093712">
    <property type="protein sequence ID" value="AAH93712.1"/>
    <property type="molecule type" value="mRNA"/>
</dbReference>
<dbReference type="CCDS" id="CCDS14570.1"/>
<dbReference type="RefSeq" id="NP_009162.1">
    <property type="nucleotide sequence ID" value="NM_007231.5"/>
</dbReference>
<dbReference type="SMR" id="Q9UN76"/>
<dbReference type="BioGRID" id="116415">
    <property type="interactions" value="4"/>
</dbReference>
<dbReference type="FunCoup" id="Q9UN76">
    <property type="interactions" value="34"/>
</dbReference>
<dbReference type="STRING" id="9606.ENSP00000470801"/>
<dbReference type="BindingDB" id="Q9UN76"/>
<dbReference type="ChEMBL" id="CHEMBL4680044"/>
<dbReference type="DrugBank" id="DB03929">
    <property type="generic name" value="D-Serine"/>
</dbReference>
<dbReference type="DrugBank" id="DB00130">
    <property type="generic name" value="L-Glutamine"/>
</dbReference>
<dbReference type="DrugBank" id="DB00172">
    <property type="generic name" value="Proline"/>
</dbReference>
<dbReference type="DrugBank" id="DB00577">
    <property type="generic name" value="Valaciclovir"/>
</dbReference>
<dbReference type="DrugBank" id="DB01610">
    <property type="generic name" value="Valganciclovir"/>
</dbReference>
<dbReference type="GuidetoPHARMACOLOGY" id="937"/>
<dbReference type="TCDB" id="2.A.22.2.3">
    <property type="family name" value="the neurotransmitter:sodium symporter (nss) family"/>
</dbReference>
<dbReference type="GlyConnect" id="1751">
    <property type="glycosylation" value="3 N-Linked glycans (3 sites)"/>
</dbReference>
<dbReference type="GlyCosmos" id="Q9UN76">
    <property type="glycosylation" value="8 sites, 3 glycans"/>
</dbReference>
<dbReference type="GlyGen" id="Q9UN76">
    <property type="glycosylation" value="8 sites, 3 N-linked glycans (3 sites)"/>
</dbReference>
<dbReference type="iPTMnet" id="Q9UN76"/>
<dbReference type="PhosphoSitePlus" id="Q9UN76"/>
<dbReference type="BioMuta" id="SLC6A14"/>
<dbReference type="DMDM" id="41018156"/>
<dbReference type="jPOST" id="Q9UN76"/>
<dbReference type="MassIVE" id="Q9UN76"/>
<dbReference type="PaxDb" id="9606-ENSP00000470801"/>
<dbReference type="PeptideAtlas" id="Q9UN76"/>
<dbReference type="ProteomicsDB" id="85268"/>
<dbReference type="Pumba" id="Q9UN76"/>
<dbReference type="Antibodypedia" id="73032">
    <property type="antibodies" value="117 antibodies from 23 providers"/>
</dbReference>
<dbReference type="DNASU" id="11254"/>
<dbReference type="Ensembl" id="ENST00000598581.3">
    <property type="protein sequence ID" value="ENSP00000470801.1"/>
    <property type="gene ID" value="ENSG00000268104.3"/>
</dbReference>
<dbReference type="GeneID" id="11254"/>
<dbReference type="KEGG" id="hsa:11254"/>
<dbReference type="MANE-Select" id="ENST00000598581.3">
    <property type="protein sequence ID" value="ENSP00000470801.1"/>
    <property type="RefSeq nucleotide sequence ID" value="NM_007231.5"/>
    <property type="RefSeq protein sequence ID" value="NP_009162.1"/>
</dbReference>
<dbReference type="UCSC" id="uc033eru.2">
    <property type="organism name" value="human"/>
</dbReference>
<dbReference type="AGR" id="HGNC:11047"/>
<dbReference type="CTD" id="11254"/>
<dbReference type="DisGeNET" id="11254"/>
<dbReference type="GeneCards" id="SLC6A14"/>
<dbReference type="HGNC" id="HGNC:11047">
    <property type="gene designation" value="SLC6A14"/>
</dbReference>
<dbReference type="HPA" id="ENSG00000268104">
    <property type="expression patterns" value="Tissue enhanced (lung, salivary gland)"/>
</dbReference>
<dbReference type="MalaCards" id="SLC6A14"/>
<dbReference type="MIM" id="300444">
    <property type="type" value="gene"/>
</dbReference>
<dbReference type="neXtProt" id="NX_Q9UN76"/>
<dbReference type="OpenTargets" id="ENSG00000268104"/>
<dbReference type="Orphanet" id="586">
    <property type="disease" value="Cystic fibrosis"/>
</dbReference>
<dbReference type="PharmGKB" id="PA35910"/>
<dbReference type="VEuPathDB" id="HostDB:ENSG00000268104"/>
<dbReference type="eggNOG" id="KOG3660">
    <property type="taxonomic scope" value="Eukaryota"/>
</dbReference>
<dbReference type="GeneTree" id="ENSGT00940000154963"/>
<dbReference type="HOGENOM" id="CLU_006855_4_1_1"/>
<dbReference type="InParanoid" id="Q9UN76"/>
<dbReference type="OMA" id="APNWGPY"/>
<dbReference type="OrthoDB" id="6581954at2759"/>
<dbReference type="PAN-GO" id="Q9UN76">
    <property type="GO annotations" value="2 GO annotations based on evolutionary models"/>
</dbReference>
<dbReference type="PhylomeDB" id="Q9UN76"/>
<dbReference type="TreeFam" id="TF343812"/>
<dbReference type="PathwayCommons" id="Q9UN76"/>
<dbReference type="Reactome" id="R-HSA-352230">
    <property type="pathway name" value="Amino acid transport across the plasma membrane"/>
</dbReference>
<dbReference type="Reactome" id="R-HSA-442660">
    <property type="pathway name" value="Na+/Cl- dependent neurotransmitter transporters"/>
</dbReference>
<dbReference type="Reactome" id="R-HSA-5619094">
    <property type="pathway name" value="Variant SLC6A14 may confer susceptibility towards obesity"/>
</dbReference>
<dbReference type="BioGRID-ORCS" id="11254">
    <property type="hits" value="23 hits in 782 CRISPR screens"/>
</dbReference>
<dbReference type="ChiTaRS" id="SLC6A14">
    <property type="organism name" value="human"/>
</dbReference>
<dbReference type="GeneWiki" id="SLC6A14"/>
<dbReference type="GenomeRNAi" id="11254"/>
<dbReference type="Pharos" id="Q9UN76">
    <property type="development level" value="Tchem"/>
</dbReference>
<dbReference type="PRO" id="PR:Q9UN76"/>
<dbReference type="Proteomes" id="UP000005640">
    <property type="component" value="Chromosome X"/>
</dbReference>
<dbReference type="RNAct" id="Q9UN76">
    <property type="molecule type" value="protein"/>
</dbReference>
<dbReference type="Bgee" id="ENSG00000268104">
    <property type="expression patterns" value="Expressed in palpebral conjunctiva and 110 other cell types or tissues"/>
</dbReference>
<dbReference type="GO" id="GO:0016324">
    <property type="term" value="C:apical plasma membrane"/>
    <property type="evidence" value="ECO:0000250"/>
    <property type="project" value="UniProtKB"/>
</dbReference>
<dbReference type="GO" id="GO:0070062">
    <property type="term" value="C:extracellular exosome"/>
    <property type="evidence" value="ECO:0007005"/>
    <property type="project" value="UniProtKB"/>
</dbReference>
<dbReference type="GO" id="GO:0016020">
    <property type="term" value="C:membrane"/>
    <property type="evidence" value="ECO:0000304"/>
    <property type="project" value="ProtInc"/>
</dbReference>
<dbReference type="GO" id="GO:0005886">
    <property type="term" value="C:plasma membrane"/>
    <property type="evidence" value="ECO:0000318"/>
    <property type="project" value="GO_Central"/>
</dbReference>
<dbReference type="GO" id="GO:0031982">
    <property type="term" value="C:vesicle"/>
    <property type="evidence" value="ECO:0007005"/>
    <property type="project" value="UniProtKB"/>
</dbReference>
<dbReference type="GO" id="GO:1901235">
    <property type="term" value="F:(R)-carnitine transmembrane transporter activity"/>
    <property type="evidence" value="ECO:0000314"/>
    <property type="project" value="UniProtKB"/>
</dbReference>
<dbReference type="GO" id="GO:0022858">
    <property type="term" value="F:alanine transmembrane transporter activity"/>
    <property type="evidence" value="ECO:0000314"/>
    <property type="project" value="ARUK-UCL"/>
</dbReference>
<dbReference type="GO" id="GO:0015171">
    <property type="term" value="F:amino acid transmembrane transporter activity"/>
    <property type="evidence" value="ECO:0000304"/>
    <property type="project" value="Reactome"/>
</dbReference>
<dbReference type="GO" id="GO:0015173">
    <property type="term" value="F:aromatic amino acid transmembrane transporter activity"/>
    <property type="evidence" value="ECO:0000314"/>
    <property type="project" value="UniProtKB"/>
</dbReference>
<dbReference type="GO" id="GO:0001761">
    <property type="term" value="F:beta-alanine transmembrane transporter activity"/>
    <property type="evidence" value="ECO:0000314"/>
    <property type="project" value="UniProtKB"/>
</dbReference>
<dbReference type="GO" id="GO:0015657">
    <property type="term" value="F:branched-chain amino acid:sodium symporter activity"/>
    <property type="evidence" value="ECO:0000314"/>
    <property type="project" value="UniProtKB"/>
</dbReference>
<dbReference type="GO" id="GO:0015374">
    <property type="term" value="F:neutral, basic amino acid:sodium:chloride symporter activity"/>
    <property type="evidence" value="ECO:0000314"/>
    <property type="project" value="UniProtKB"/>
</dbReference>
<dbReference type="GO" id="GO:1902270">
    <property type="term" value="P:(R)-carnitine transmembrane transport"/>
    <property type="evidence" value="ECO:0000314"/>
    <property type="project" value="UniProtKB"/>
</dbReference>
<dbReference type="GO" id="GO:0032328">
    <property type="term" value="P:alanine transport"/>
    <property type="evidence" value="ECO:0000314"/>
    <property type="project" value="ARUK-UCL"/>
</dbReference>
<dbReference type="GO" id="GO:0089718">
    <property type="term" value="P:amino acid import across plasma membrane"/>
    <property type="evidence" value="ECO:0000314"/>
    <property type="project" value="UniProtKB"/>
</dbReference>
<dbReference type="GO" id="GO:0003333">
    <property type="term" value="P:amino acid transmembrane transport"/>
    <property type="evidence" value="ECO:0000304"/>
    <property type="project" value="GO_Central"/>
</dbReference>
<dbReference type="GO" id="GO:0006865">
    <property type="term" value="P:amino acid transport"/>
    <property type="evidence" value="ECO:0000304"/>
    <property type="project" value="Reactome"/>
</dbReference>
<dbReference type="GO" id="GO:0001762">
    <property type="term" value="P:beta-alanine transport"/>
    <property type="evidence" value="ECO:0000314"/>
    <property type="project" value="UniProtKB"/>
</dbReference>
<dbReference type="GO" id="GO:1903804">
    <property type="term" value="P:glycine import across plasma membrane"/>
    <property type="evidence" value="ECO:0000318"/>
    <property type="project" value="GO_Central"/>
</dbReference>
<dbReference type="GO" id="GO:0009636">
    <property type="term" value="P:response to toxic substance"/>
    <property type="evidence" value="ECO:0000314"/>
    <property type="project" value="UniProtKB"/>
</dbReference>
<dbReference type="GO" id="GO:0035725">
    <property type="term" value="P:sodium ion transmembrane transport"/>
    <property type="evidence" value="ECO:0000318"/>
    <property type="project" value="GO_Central"/>
</dbReference>
<dbReference type="CDD" id="cd11501">
    <property type="entry name" value="SLC6sbd_ATB0"/>
    <property type="match status" value="1"/>
</dbReference>
<dbReference type="InterPro" id="IPR000175">
    <property type="entry name" value="Na/ntran_symport"/>
</dbReference>
<dbReference type="InterPro" id="IPR037272">
    <property type="entry name" value="SNS_sf"/>
</dbReference>
<dbReference type="PANTHER" id="PTHR11616:SF286">
    <property type="entry name" value="SODIUM- AND CHLORIDE-DEPENDENT NEUTRAL AND BASIC AMINO ACID TRANSPORTER B(0+)"/>
    <property type="match status" value="1"/>
</dbReference>
<dbReference type="PANTHER" id="PTHR11616">
    <property type="entry name" value="SODIUM/CHLORIDE DEPENDENT TRANSPORTER"/>
    <property type="match status" value="1"/>
</dbReference>
<dbReference type="Pfam" id="PF00209">
    <property type="entry name" value="SNF"/>
    <property type="match status" value="1"/>
</dbReference>
<dbReference type="PRINTS" id="PR00176">
    <property type="entry name" value="NANEUSMPORT"/>
</dbReference>
<dbReference type="SUPFAM" id="SSF161070">
    <property type="entry name" value="SNF-like"/>
    <property type="match status" value="1"/>
</dbReference>
<dbReference type="PROSITE" id="PS00610">
    <property type="entry name" value="NA_NEUROTRAN_SYMP_1"/>
    <property type="match status" value="1"/>
</dbReference>
<dbReference type="PROSITE" id="PS00754">
    <property type="entry name" value="NA_NEUROTRAN_SYMP_2"/>
    <property type="match status" value="1"/>
</dbReference>
<dbReference type="PROSITE" id="PS50267">
    <property type="entry name" value="NA_NEUROTRAN_SYMP_3"/>
    <property type="match status" value="1"/>
</dbReference>
<gene>
    <name evidence="12" type="primary">SLC6A14</name>
</gene>
<feature type="chain" id="PRO_0000214795" description="Sodium- and chloride-dependent neutral and basic amino acid transporter B(0+)">
    <location>
        <begin position="1"/>
        <end position="642"/>
    </location>
</feature>
<feature type="topological domain" description="Cytoplasmic" evidence="2">
    <location>
        <begin position="1"/>
        <end position="44"/>
    </location>
</feature>
<feature type="transmembrane region" description="Helical; Name=1" evidence="2">
    <location>
        <begin position="45"/>
        <end position="65"/>
    </location>
</feature>
<feature type="transmembrane region" description="Helical; Name=2" evidence="2">
    <location>
        <begin position="72"/>
        <end position="92"/>
    </location>
</feature>
<feature type="transmembrane region" description="Helical; Name=3" evidence="2">
    <location>
        <begin position="110"/>
        <end position="130"/>
    </location>
</feature>
<feature type="topological domain" description="Extracellular" evidence="2">
    <location>
        <begin position="131"/>
        <end position="234"/>
    </location>
</feature>
<feature type="transmembrane region" description="Helical; Name=4" evidence="2">
    <location>
        <begin position="235"/>
        <end position="255"/>
    </location>
</feature>
<feature type="transmembrane region" description="Helical; Name=5" evidence="2">
    <location>
        <begin position="261"/>
        <end position="281"/>
    </location>
</feature>
<feature type="transmembrane region" description="Helical; Name=6" evidence="2">
    <location>
        <begin position="315"/>
        <end position="335"/>
    </location>
</feature>
<feature type="transmembrane region" description="Helical; Name=7" evidence="2">
    <location>
        <begin position="348"/>
        <end position="368"/>
    </location>
</feature>
<feature type="transmembrane region" description="Helical; Name=8" evidence="2">
    <location>
        <begin position="399"/>
        <end position="419"/>
    </location>
</feature>
<feature type="transmembrane region" description="Helical; Name=9" evidence="2">
    <location>
        <begin position="450"/>
        <end position="477"/>
    </location>
</feature>
<feature type="transmembrane region" description="Helical; Name=10" evidence="2">
    <location>
        <begin position="480"/>
        <end position="500"/>
    </location>
</feature>
<feature type="transmembrane region" description="Helical; Name=11" evidence="2">
    <location>
        <begin position="528"/>
        <end position="548"/>
    </location>
</feature>
<feature type="transmembrane region" description="Helical; Name=12" evidence="2">
    <location>
        <begin position="563"/>
        <end position="583"/>
    </location>
</feature>
<feature type="topological domain" description="Cytoplasmic" evidence="2">
    <location>
        <begin position="584"/>
        <end position="642"/>
    </location>
</feature>
<feature type="region of interest" description="Disordered" evidence="3">
    <location>
        <begin position="622"/>
        <end position="642"/>
    </location>
</feature>
<feature type="compositionally biased region" description="Basic and acidic residues" evidence="3">
    <location>
        <begin position="622"/>
        <end position="632"/>
    </location>
</feature>
<feature type="glycosylation site" description="N-linked (GlcNAc...) asparagine" evidence="2">
    <location>
        <position position="155"/>
    </location>
</feature>
<feature type="glycosylation site" description="N-linked (GlcNAc...) asparagine" evidence="2">
    <location>
        <position position="163"/>
    </location>
</feature>
<feature type="glycosylation site" description="N-linked (GlcNAc...) asparagine" evidence="2">
    <location>
        <position position="174"/>
    </location>
</feature>
<feature type="glycosylation site" description="N-linked (GlcNAc...) asparagine" evidence="2">
    <location>
        <position position="189"/>
    </location>
</feature>
<feature type="glycosylation site" description="N-linked (GlcNAc...) asparagine" evidence="2">
    <location>
        <position position="197"/>
    </location>
</feature>
<feature type="glycosylation site" description="N-linked (GlcNAc...) asparagine" evidence="2">
    <location>
        <position position="202"/>
    </location>
</feature>
<feature type="glycosylation site" description="N-linked (GlcNAc...) asparagine" evidence="2">
    <location>
        <position position="230"/>
    </location>
</feature>
<feature type="glycosylation site" description="N-linked (GlcNAc...) asparagine" evidence="2">
    <location>
        <position position="302"/>
    </location>
</feature>
<keyword id="KW-0029">Amino-acid transport</keyword>
<keyword id="KW-1003">Cell membrane</keyword>
<keyword id="KW-0325">Glycoprotein</keyword>
<keyword id="KW-0472">Membrane</keyword>
<keyword id="KW-0550">Obesity</keyword>
<keyword id="KW-1267">Proteomics identification</keyword>
<keyword id="KW-1185">Reference proteome</keyword>
<keyword id="KW-0769">Symport</keyword>
<keyword id="KW-0812">Transmembrane</keyword>
<keyword id="KW-1133">Transmembrane helix</keyword>
<keyword id="KW-0813">Transport</keyword>
<name>S6A14_HUMAN</name>
<evidence type="ECO:0000250" key="1">
    <source>
        <dbReference type="UniProtKB" id="Q9JMA9"/>
    </source>
</evidence>
<evidence type="ECO:0000255" key="2"/>
<evidence type="ECO:0000256" key="3">
    <source>
        <dbReference type="SAM" id="MobiDB-lite"/>
    </source>
</evidence>
<evidence type="ECO:0000269" key="4">
    <source>
    </source>
</evidence>
<evidence type="ECO:0000269" key="5">
    <source>
    </source>
</evidence>
<evidence type="ECO:0000269" key="6">
    <source>
    </source>
</evidence>
<evidence type="ECO:0000269" key="7">
    <source>
    </source>
</evidence>
<evidence type="ECO:0000269" key="8">
    <source>
    </source>
</evidence>
<evidence type="ECO:0000305" key="9"/>
<evidence type="ECO:0000305" key="10">
    <source>
    </source>
</evidence>
<evidence type="ECO:0000305" key="11">
    <source>
    </source>
</evidence>
<evidence type="ECO:0000312" key="12">
    <source>
        <dbReference type="HGNC" id="HGNC:11047"/>
    </source>
</evidence>
<reference key="1">
    <citation type="journal article" date="1999" name="J. Biol. Chem.">
        <title>Cloning and functional expression of a human Na(+) and Cl(-)-dependent neutral and cationic amino acid transporter B(0+).</title>
        <authorList>
            <person name="Sloan J.L."/>
            <person name="Mager S."/>
        </authorList>
    </citation>
    <scope>NUCLEOTIDE SEQUENCE [MRNA]</scope>
    <scope>FUNCTION</scope>
    <scope>TISSUE SPECIFICITY</scope>
    <scope>TRANSPORTER ACTIVITY</scope>
    <source>
        <tissue>Mammary gland</tissue>
    </source>
</reference>
<reference key="2">
    <citation type="journal article" date="2005" name="Nature">
        <title>The DNA sequence of the human X chromosome.</title>
        <authorList>
            <person name="Ross M.T."/>
            <person name="Grafham D.V."/>
            <person name="Coffey A.J."/>
            <person name="Scherer S."/>
            <person name="McLay K."/>
            <person name="Muzny D."/>
            <person name="Platzer M."/>
            <person name="Howell G.R."/>
            <person name="Burrows C."/>
            <person name="Bird C.P."/>
            <person name="Frankish A."/>
            <person name="Lovell F.L."/>
            <person name="Howe K.L."/>
            <person name="Ashurst J.L."/>
            <person name="Fulton R.S."/>
            <person name="Sudbrak R."/>
            <person name="Wen G."/>
            <person name="Jones M.C."/>
            <person name="Hurles M.E."/>
            <person name="Andrews T.D."/>
            <person name="Scott C.E."/>
            <person name="Searle S."/>
            <person name="Ramser J."/>
            <person name="Whittaker A."/>
            <person name="Deadman R."/>
            <person name="Carter N.P."/>
            <person name="Hunt S.E."/>
            <person name="Chen R."/>
            <person name="Cree A."/>
            <person name="Gunaratne P."/>
            <person name="Havlak P."/>
            <person name="Hodgson A."/>
            <person name="Metzker M.L."/>
            <person name="Richards S."/>
            <person name="Scott G."/>
            <person name="Steffen D."/>
            <person name="Sodergren E."/>
            <person name="Wheeler D.A."/>
            <person name="Worley K.C."/>
            <person name="Ainscough R."/>
            <person name="Ambrose K.D."/>
            <person name="Ansari-Lari M.A."/>
            <person name="Aradhya S."/>
            <person name="Ashwell R.I."/>
            <person name="Babbage A.K."/>
            <person name="Bagguley C.L."/>
            <person name="Ballabio A."/>
            <person name="Banerjee R."/>
            <person name="Barker G.E."/>
            <person name="Barlow K.F."/>
            <person name="Barrett I.P."/>
            <person name="Bates K.N."/>
            <person name="Beare D.M."/>
            <person name="Beasley H."/>
            <person name="Beasley O."/>
            <person name="Beck A."/>
            <person name="Bethel G."/>
            <person name="Blechschmidt K."/>
            <person name="Brady N."/>
            <person name="Bray-Allen S."/>
            <person name="Bridgeman A.M."/>
            <person name="Brown A.J."/>
            <person name="Brown M.J."/>
            <person name="Bonnin D."/>
            <person name="Bruford E.A."/>
            <person name="Buhay C."/>
            <person name="Burch P."/>
            <person name="Burford D."/>
            <person name="Burgess J."/>
            <person name="Burrill W."/>
            <person name="Burton J."/>
            <person name="Bye J.M."/>
            <person name="Carder C."/>
            <person name="Carrel L."/>
            <person name="Chako J."/>
            <person name="Chapman J.C."/>
            <person name="Chavez D."/>
            <person name="Chen E."/>
            <person name="Chen G."/>
            <person name="Chen Y."/>
            <person name="Chen Z."/>
            <person name="Chinault C."/>
            <person name="Ciccodicola A."/>
            <person name="Clark S.Y."/>
            <person name="Clarke G."/>
            <person name="Clee C.M."/>
            <person name="Clegg S."/>
            <person name="Clerc-Blankenburg K."/>
            <person name="Clifford K."/>
            <person name="Cobley V."/>
            <person name="Cole C.G."/>
            <person name="Conquer J.S."/>
            <person name="Corby N."/>
            <person name="Connor R.E."/>
            <person name="David R."/>
            <person name="Davies J."/>
            <person name="Davis C."/>
            <person name="Davis J."/>
            <person name="Delgado O."/>
            <person name="Deshazo D."/>
            <person name="Dhami P."/>
            <person name="Ding Y."/>
            <person name="Dinh H."/>
            <person name="Dodsworth S."/>
            <person name="Draper H."/>
            <person name="Dugan-Rocha S."/>
            <person name="Dunham A."/>
            <person name="Dunn M."/>
            <person name="Durbin K.J."/>
            <person name="Dutta I."/>
            <person name="Eades T."/>
            <person name="Ellwood M."/>
            <person name="Emery-Cohen A."/>
            <person name="Errington H."/>
            <person name="Evans K.L."/>
            <person name="Faulkner L."/>
            <person name="Francis F."/>
            <person name="Frankland J."/>
            <person name="Fraser A.E."/>
            <person name="Galgoczy P."/>
            <person name="Gilbert J."/>
            <person name="Gill R."/>
            <person name="Gloeckner G."/>
            <person name="Gregory S.G."/>
            <person name="Gribble S."/>
            <person name="Griffiths C."/>
            <person name="Grocock R."/>
            <person name="Gu Y."/>
            <person name="Gwilliam R."/>
            <person name="Hamilton C."/>
            <person name="Hart E.A."/>
            <person name="Hawes A."/>
            <person name="Heath P.D."/>
            <person name="Heitmann K."/>
            <person name="Hennig S."/>
            <person name="Hernandez J."/>
            <person name="Hinzmann B."/>
            <person name="Ho S."/>
            <person name="Hoffs M."/>
            <person name="Howden P.J."/>
            <person name="Huckle E.J."/>
            <person name="Hume J."/>
            <person name="Hunt P.J."/>
            <person name="Hunt A.R."/>
            <person name="Isherwood J."/>
            <person name="Jacob L."/>
            <person name="Johnson D."/>
            <person name="Jones S."/>
            <person name="de Jong P.J."/>
            <person name="Joseph S.S."/>
            <person name="Keenan S."/>
            <person name="Kelly S."/>
            <person name="Kershaw J.K."/>
            <person name="Khan Z."/>
            <person name="Kioschis P."/>
            <person name="Klages S."/>
            <person name="Knights A.J."/>
            <person name="Kosiura A."/>
            <person name="Kovar-Smith C."/>
            <person name="Laird G.K."/>
            <person name="Langford C."/>
            <person name="Lawlor S."/>
            <person name="Leversha M."/>
            <person name="Lewis L."/>
            <person name="Liu W."/>
            <person name="Lloyd C."/>
            <person name="Lloyd D.M."/>
            <person name="Loulseged H."/>
            <person name="Loveland J.E."/>
            <person name="Lovell J.D."/>
            <person name="Lozado R."/>
            <person name="Lu J."/>
            <person name="Lyne R."/>
            <person name="Ma J."/>
            <person name="Maheshwari M."/>
            <person name="Matthews L.H."/>
            <person name="McDowall J."/>
            <person name="McLaren S."/>
            <person name="McMurray A."/>
            <person name="Meidl P."/>
            <person name="Meitinger T."/>
            <person name="Milne S."/>
            <person name="Miner G."/>
            <person name="Mistry S.L."/>
            <person name="Morgan M."/>
            <person name="Morris S."/>
            <person name="Mueller I."/>
            <person name="Mullikin J.C."/>
            <person name="Nguyen N."/>
            <person name="Nordsiek G."/>
            <person name="Nyakatura G."/>
            <person name="O'dell C.N."/>
            <person name="Okwuonu G."/>
            <person name="Palmer S."/>
            <person name="Pandian R."/>
            <person name="Parker D."/>
            <person name="Parrish J."/>
            <person name="Pasternak S."/>
            <person name="Patel D."/>
            <person name="Pearce A.V."/>
            <person name="Pearson D.M."/>
            <person name="Pelan S.E."/>
            <person name="Perez L."/>
            <person name="Porter K.M."/>
            <person name="Ramsey Y."/>
            <person name="Reichwald K."/>
            <person name="Rhodes S."/>
            <person name="Ridler K.A."/>
            <person name="Schlessinger D."/>
            <person name="Schueler M.G."/>
            <person name="Sehra H.K."/>
            <person name="Shaw-Smith C."/>
            <person name="Shen H."/>
            <person name="Sheridan E.M."/>
            <person name="Shownkeen R."/>
            <person name="Skuce C.D."/>
            <person name="Smith M.L."/>
            <person name="Sotheran E.C."/>
            <person name="Steingruber H.E."/>
            <person name="Steward C.A."/>
            <person name="Storey R."/>
            <person name="Swann R.M."/>
            <person name="Swarbreck D."/>
            <person name="Tabor P.E."/>
            <person name="Taudien S."/>
            <person name="Taylor T."/>
            <person name="Teague B."/>
            <person name="Thomas K."/>
            <person name="Thorpe A."/>
            <person name="Timms K."/>
            <person name="Tracey A."/>
            <person name="Trevanion S."/>
            <person name="Tromans A.C."/>
            <person name="d'Urso M."/>
            <person name="Verduzco D."/>
            <person name="Villasana D."/>
            <person name="Waldron L."/>
            <person name="Wall M."/>
            <person name="Wang Q."/>
            <person name="Warren J."/>
            <person name="Warry G.L."/>
            <person name="Wei X."/>
            <person name="West A."/>
            <person name="Whitehead S.L."/>
            <person name="Whiteley M.N."/>
            <person name="Wilkinson J.E."/>
            <person name="Willey D.L."/>
            <person name="Williams G."/>
            <person name="Williams L."/>
            <person name="Williamson A."/>
            <person name="Williamson H."/>
            <person name="Wilming L."/>
            <person name="Woodmansey R.L."/>
            <person name="Wray P.W."/>
            <person name="Yen J."/>
            <person name="Zhang J."/>
            <person name="Zhou J."/>
            <person name="Zoghbi H."/>
            <person name="Zorilla S."/>
            <person name="Buck D."/>
            <person name="Reinhardt R."/>
            <person name="Poustka A."/>
            <person name="Rosenthal A."/>
            <person name="Lehrach H."/>
            <person name="Meindl A."/>
            <person name="Minx P.J."/>
            <person name="Hillier L.W."/>
            <person name="Willard H.F."/>
            <person name="Wilson R.K."/>
            <person name="Waterston R.H."/>
            <person name="Rice C.M."/>
            <person name="Vaudin M."/>
            <person name="Coulson A."/>
            <person name="Nelson D.L."/>
            <person name="Weinstock G."/>
            <person name="Sulston J.E."/>
            <person name="Durbin R.M."/>
            <person name="Hubbard T."/>
            <person name="Gibbs R.A."/>
            <person name="Beck S."/>
            <person name="Rogers J."/>
            <person name="Bentley D.R."/>
        </authorList>
    </citation>
    <scope>NUCLEOTIDE SEQUENCE [LARGE SCALE GENOMIC DNA]</scope>
</reference>
<reference key="3">
    <citation type="journal article" date="2004" name="Genome Res.">
        <title>The status, quality, and expansion of the NIH full-length cDNA project: the Mammalian Gene Collection (MGC).</title>
        <authorList>
            <consortium name="The MGC Project Team"/>
        </authorList>
    </citation>
    <scope>NUCLEOTIDE SEQUENCE [LARGE SCALE MRNA]</scope>
</reference>
<reference key="4">
    <citation type="journal article" date="2007" name="Am. J. Physiol.">
        <title>Transport of butyryl-L-carnitine, a potential prodrug, via the carnitine transporter OCTN2 and the amino acid transporter ATB(0,+).</title>
        <authorList>
            <person name="Srinivas S.R."/>
            <person name="Prasad P.D."/>
            <person name="Umapathy N.S."/>
            <person name="Ganapathy V."/>
            <person name="Shekhawat P.S."/>
        </authorList>
    </citation>
    <scope>FUNCTION</scope>
    <scope>TRANSPORTER ACTIVITY</scope>
    <scope>BIOPHYSICOCHEMICAL PROPERTIES</scope>
</reference>
<reference key="5">
    <citation type="journal article" date="2008" name="J. Physiol. (Lond.)">
        <title>Human solute carrier SLC6A14 is the beta-alanine carrier.</title>
        <authorList>
            <person name="Anderson C.M."/>
            <person name="Ganapathy V."/>
            <person name="Thwaites D.T."/>
        </authorList>
    </citation>
    <scope>FUNCTION</scope>
    <scope>TRANSPORTER ACITVITY</scope>
</reference>
<reference key="6">
    <citation type="journal article" date="2003" name="J. Clin. Invest.">
        <title>Do allelic variants of SLC6A14 predispose to obesity?</title>
        <authorList>
            <person name="Tiwari H.K."/>
            <person name="Allison D.B."/>
        </authorList>
    </citation>
    <scope>POSSIBLE INVOLVEMENT IN SUSCEPTIBILITY TO OBESITY</scope>
</reference>
<reference key="7">
    <citation type="journal article" date="2003" name="J. Clin. Invest.">
        <title>The SLC6A14 gene shows evidence of association with obesity.</title>
        <authorList>
            <person name="Suviolahti E."/>
            <person name="Oksanen L.J."/>
            <person name="Oehman M."/>
            <person name="Cantor R.M."/>
            <person name="Ridderstrale M."/>
            <person name="Tuomi T."/>
            <person name="Kaprio J."/>
            <person name="Rissanen A."/>
            <person name="Mustajoki P."/>
            <person name="Jousilahti P."/>
            <person name="Vartiainen E."/>
            <person name="Silander K."/>
            <person name="Kilpikari R."/>
            <person name="Salomaa V."/>
            <person name="Groop L."/>
            <person name="Kontula K."/>
            <person name="Peltonen L."/>
            <person name="Pajukanta P."/>
        </authorList>
    </citation>
    <scope>POSSIBLE INVOLVEMENT IN SUSCEPTIBILITY TO OBESITY</scope>
</reference>
<accession>Q9UN76</accession>
<accession>Q5H942</accession>
<protein>
    <recommendedName>
        <fullName evidence="9">Sodium- and chloride-dependent neutral and basic amino acid transporter B(0+)</fullName>
    </recommendedName>
    <alternativeName>
        <fullName>Amino acid transporter ATB0+</fullName>
    </alternativeName>
    <alternativeName>
        <fullName>Solute carrier family 6 member 14</fullName>
    </alternativeName>
</protein>
<proteinExistence type="evidence at protein level"/>
<sequence>MDKLKCPSFFKCREKEKVSASSENFHVGENDENQDRGNWSKKSDYLLSMIGYAVGLGNVWRFPYLTYSNGGGAFLIPYAIMLALAGLPLFFLECSLGQFASLGPVSVWRILPLFQGVGITMVLISIFVTIYYNVIIAYSLYYMFASFQSELPWKNCSSWSDKNCSRSPIVTHCNVSTVNKGIQEIIQMNKSWVDINNFTCINGSEIYQPGQLPSEQYWNKVALQRSSGMNETGVIVWYLALCLLLAWLIVGAALFKGIKSSGKVVYFTALFPYVVLLILLVRGATLEGASKGISYYIGAQSNFTKLKEAEVWKDAATQIFYSLSVAWGGLVALSSYNKFKNNCFSDAIVVCLTNCLTSVFAGFAIFSILGHMAHISGKEVSQVVKSGFDLAFIAYPEALAQLPGGPFWSILFFFMLLTLGLDSQFASIETITTTIQDLFPKVMKKMRVPITLGCCLVLFLLGLVCVTQAGIYWVHLIDHFCAGWGILIAAILELVGIIWIYGGNRFIEDTEMMIGAKRWIFWLWWRACWFVITPILLIAIFIWSLVQFHRPNYGAIPYPDWGVALGWCMIVFCIIWIPIMAIIKIIQAKGNIFQRLISCCRPASNWGPYLEQHRGERYKDMVDPKKEADHEIPTVSGSRKPE</sequence>